<proteinExistence type="inferred from homology"/>
<evidence type="ECO:0000255" key="1">
    <source>
        <dbReference type="HAMAP-Rule" id="MF_00129"/>
    </source>
</evidence>
<protein>
    <recommendedName>
        <fullName evidence="1">tRNA uridine 5-carboxymethylaminomethyl modification enzyme MnmG</fullName>
    </recommendedName>
    <alternativeName>
        <fullName evidence="1">Glucose-inhibited division protein A</fullName>
    </alternativeName>
</protein>
<gene>
    <name evidence="1" type="primary">mnmG</name>
    <name evidence="1" type="synonym">gidA</name>
    <name type="ordered locus">BALH_4990</name>
</gene>
<reference key="1">
    <citation type="journal article" date="2007" name="J. Bacteriol.">
        <title>The complete genome sequence of Bacillus thuringiensis Al Hakam.</title>
        <authorList>
            <person name="Challacombe J.F."/>
            <person name="Altherr M.R."/>
            <person name="Xie G."/>
            <person name="Bhotika S.S."/>
            <person name="Brown N."/>
            <person name="Bruce D."/>
            <person name="Campbell C.S."/>
            <person name="Campbell M.L."/>
            <person name="Chen J."/>
            <person name="Chertkov O."/>
            <person name="Cleland C."/>
            <person name="Dimitrijevic M."/>
            <person name="Doggett N.A."/>
            <person name="Fawcett J.J."/>
            <person name="Glavina T."/>
            <person name="Goodwin L.A."/>
            <person name="Green L.D."/>
            <person name="Han C.S."/>
            <person name="Hill K.K."/>
            <person name="Hitchcock P."/>
            <person name="Jackson P.J."/>
            <person name="Keim P."/>
            <person name="Kewalramani A.R."/>
            <person name="Longmire J."/>
            <person name="Lucas S."/>
            <person name="Malfatti S."/>
            <person name="Martinez D."/>
            <person name="McMurry K."/>
            <person name="Meincke L.J."/>
            <person name="Misra M."/>
            <person name="Moseman B.L."/>
            <person name="Mundt M."/>
            <person name="Munk A.C."/>
            <person name="Okinaka R.T."/>
            <person name="Parson-Quintana B."/>
            <person name="Reilly L.P."/>
            <person name="Richardson P."/>
            <person name="Robinson D.L."/>
            <person name="Saunders E."/>
            <person name="Tapia R."/>
            <person name="Tesmer J.G."/>
            <person name="Thayer N."/>
            <person name="Thompson L.S."/>
            <person name="Tice H."/>
            <person name="Ticknor L.O."/>
            <person name="Wills P.L."/>
            <person name="Gilna P."/>
            <person name="Brettin T.S."/>
        </authorList>
    </citation>
    <scope>NUCLEOTIDE SEQUENCE [LARGE SCALE GENOMIC DNA]</scope>
    <source>
        <strain>Al Hakam</strain>
    </source>
</reference>
<keyword id="KW-0963">Cytoplasm</keyword>
<keyword id="KW-0274">FAD</keyword>
<keyword id="KW-0285">Flavoprotein</keyword>
<keyword id="KW-0520">NAD</keyword>
<keyword id="KW-0819">tRNA processing</keyword>
<sequence>MGYNAGSYDVIVIGAGHAGCEAGLAAARMGSKTLMLTINLDMVAFMPCNPSVGGPAKGIVVREIDALGGEMGRNIDKTHIQMRMLNTGKGPAVRALRAQADKFSYQHELKKTIEETPNLTLFQGMVERLIVEDGECKGVITQAGAEYTAKTVVITTGTFLRGEIIMGDLKYSSGPNNQQPSITLSEHLEELGFDLVRFKTGTPPRVNSNTIDYSKTEIQPGDDKPRAFSFETTKFIMDQIPCWLTYTSTETHRLIDENLHRSAMYSGMIKGTGPRYCPSIEDKVVRFNDKPRHQIFLEPEGRNTQEVYVQGLSTSLPEDVQRDMLRTIPGLENVEMMRTGYAIEYDAIVPTQLWPTLETKKIKNLYTAGQINGTSGYEEAAGQGLMAGINAACRSLGKKEVILGREDAYIGVLIDDLVTKGTNEPYRLLTSRAEYRLLLRHDNADLRLTEVGHEIGLITEERYERFTNKKLQIEQEKERLSSIIIKPRPEVQELIRNIGGSELKDGIRASDLLRRPEMTYEHIHLLVPSEVELSDEVKEQVEIQIKYEGYIEKSLQQVERMKKMENKKIPVDIDYDAISSLASEARQKLKDVRPLSMGQASRISGVNPADISILLVYIEQGKIARVSNQ</sequence>
<name>MNMG_BACAH</name>
<dbReference type="EMBL" id="CP000485">
    <property type="protein sequence ID" value="ABK88154.1"/>
    <property type="molecule type" value="Genomic_DNA"/>
</dbReference>
<dbReference type="RefSeq" id="WP_000541039.1">
    <property type="nucleotide sequence ID" value="NC_008600.1"/>
</dbReference>
<dbReference type="SMR" id="A0RLR1"/>
<dbReference type="GeneID" id="45025311"/>
<dbReference type="KEGG" id="btl:BALH_4990"/>
<dbReference type="HOGENOM" id="CLU_007831_2_2_9"/>
<dbReference type="GO" id="GO:0005829">
    <property type="term" value="C:cytosol"/>
    <property type="evidence" value="ECO:0007669"/>
    <property type="project" value="TreeGrafter"/>
</dbReference>
<dbReference type="GO" id="GO:0050660">
    <property type="term" value="F:flavin adenine dinucleotide binding"/>
    <property type="evidence" value="ECO:0007669"/>
    <property type="project" value="UniProtKB-UniRule"/>
</dbReference>
<dbReference type="GO" id="GO:0030488">
    <property type="term" value="P:tRNA methylation"/>
    <property type="evidence" value="ECO:0007669"/>
    <property type="project" value="TreeGrafter"/>
</dbReference>
<dbReference type="GO" id="GO:0002098">
    <property type="term" value="P:tRNA wobble uridine modification"/>
    <property type="evidence" value="ECO:0007669"/>
    <property type="project" value="InterPro"/>
</dbReference>
<dbReference type="FunFam" id="1.10.10.1800:FF:000001">
    <property type="entry name" value="tRNA uridine 5-carboxymethylaminomethyl modification enzyme MnmG"/>
    <property type="match status" value="1"/>
</dbReference>
<dbReference type="FunFam" id="1.10.150.570:FF:000001">
    <property type="entry name" value="tRNA uridine 5-carboxymethylaminomethyl modification enzyme MnmG"/>
    <property type="match status" value="1"/>
</dbReference>
<dbReference type="FunFam" id="3.50.50.60:FF:000002">
    <property type="entry name" value="tRNA uridine 5-carboxymethylaminomethyl modification enzyme MnmG"/>
    <property type="match status" value="1"/>
</dbReference>
<dbReference type="FunFam" id="3.50.50.60:FF:000063">
    <property type="entry name" value="tRNA uridine 5-carboxymethylaminomethyl modification enzyme MnmG"/>
    <property type="match status" value="1"/>
</dbReference>
<dbReference type="Gene3D" id="3.50.50.60">
    <property type="entry name" value="FAD/NAD(P)-binding domain"/>
    <property type="match status" value="2"/>
</dbReference>
<dbReference type="Gene3D" id="1.10.150.570">
    <property type="entry name" value="GidA associated domain, C-terminal subdomain"/>
    <property type="match status" value="1"/>
</dbReference>
<dbReference type="Gene3D" id="1.10.10.1800">
    <property type="entry name" value="tRNA uridine 5-carboxymethylaminomethyl modification enzyme MnmG/GidA"/>
    <property type="match status" value="1"/>
</dbReference>
<dbReference type="HAMAP" id="MF_00129">
    <property type="entry name" value="MnmG_GidA"/>
    <property type="match status" value="1"/>
</dbReference>
<dbReference type="InterPro" id="IPR036188">
    <property type="entry name" value="FAD/NAD-bd_sf"/>
</dbReference>
<dbReference type="InterPro" id="IPR049312">
    <property type="entry name" value="GIDA_C_N"/>
</dbReference>
<dbReference type="InterPro" id="IPR004416">
    <property type="entry name" value="MnmG"/>
</dbReference>
<dbReference type="InterPro" id="IPR002218">
    <property type="entry name" value="MnmG-rel"/>
</dbReference>
<dbReference type="InterPro" id="IPR020595">
    <property type="entry name" value="MnmG-rel_CS"/>
</dbReference>
<dbReference type="InterPro" id="IPR026904">
    <property type="entry name" value="MnmG_C"/>
</dbReference>
<dbReference type="InterPro" id="IPR047001">
    <property type="entry name" value="MnmG_C_subdom"/>
</dbReference>
<dbReference type="InterPro" id="IPR044920">
    <property type="entry name" value="MnmG_C_subdom_sf"/>
</dbReference>
<dbReference type="InterPro" id="IPR040131">
    <property type="entry name" value="MnmG_N"/>
</dbReference>
<dbReference type="NCBIfam" id="TIGR00136">
    <property type="entry name" value="mnmG_gidA"/>
    <property type="match status" value="1"/>
</dbReference>
<dbReference type="PANTHER" id="PTHR11806">
    <property type="entry name" value="GLUCOSE INHIBITED DIVISION PROTEIN A"/>
    <property type="match status" value="1"/>
</dbReference>
<dbReference type="PANTHER" id="PTHR11806:SF0">
    <property type="entry name" value="PROTEIN MTO1 HOMOLOG, MITOCHONDRIAL"/>
    <property type="match status" value="1"/>
</dbReference>
<dbReference type="Pfam" id="PF01134">
    <property type="entry name" value="GIDA"/>
    <property type="match status" value="1"/>
</dbReference>
<dbReference type="Pfam" id="PF21680">
    <property type="entry name" value="GIDA_C_1st"/>
    <property type="match status" value="1"/>
</dbReference>
<dbReference type="Pfam" id="PF13932">
    <property type="entry name" value="SAM_GIDA_C"/>
    <property type="match status" value="1"/>
</dbReference>
<dbReference type="PRINTS" id="PR00411">
    <property type="entry name" value="PNDRDTASEI"/>
</dbReference>
<dbReference type="SMART" id="SM01228">
    <property type="entry name" value="GIDA_assoc_3"/>
    <property type="match status" value="1"/>
</dbReference>
<dbReference type="SUPFAM" id="SSF51905">
    <property type="entry name" value="FAD/NAD(P)-binding domain"/>
    <property type="match status" value="1"/>
</dbReference>
<dbReference type="PROSITE" id="PS01280">
    <property type="entry name" value="GIDA_1"/>
    <property type="match status" value="1"/>
</dbReference>
<dbReference type="PROSITE" id="PS01281">
    <property type="entry name" value="GIDA_2"/>
    <property type="match status" value="1"/>
</dbReference>
<organism>
    <name type="scientific">Bacillus thuringiensis (strain Al Hakam)</name>
    <dbReference type="NCBI Taxonomy" id="412694"/>
    <lineage>
        <taxon>Bacteria</taxon>
        <taxon>Bacillati</taxon>
        <taxon>Bacillota</taxon>
        <taxon>Bacilli</taxon>
        <taxon>Bacillales</taxon>
        <taxon>Bacillaceae</taxon>
        <taxon>Bacillus</taxon>
        <taxon>Bacillus cereus group</taxon>
    </lineage>
</organism>
<accession>A0RLR1</accession>
<comment type="function">
    <text evidence="1">NAD-binding protein involved in the addition of a carboxymethylaminomethyl (cmnm) group at the wobble position (U34) of certain tRNAs, forming tRNA-cmnm(5)s(2)U34.</text>
</comment>
<comment type="cofactor">
    <cofactor evidence="1">
        <name>FAD</name>
        <dbReference type="ChEBI" id="CHEBI:57692"/>
    </cofactor>
</comment>
<comment type="subunit">
    <text evidence="1">Homodimer. Heterotetramer of two MnmE and two MnmG subunits.</text>
</comment>
<comment type="subcellular location">
    <subcellularLocation>
        <location evidence="1">Cytoplasm</location>
    </subcellularLocation>
</comment>
<comment type="similarity">
    <text evidence="1">Belongs to the MnmG family.</text>
</comment>
<feature type="chain" id="PRO_1000016548" description="tRNA uridine 5-carboxymethylaminomethyl modification enzyme MnmG">
    <location>
        <begin position="1"/>
        <end position="629"/>
    </location>
</feature>
<feature type="binding site" evidence="1">
    <location>
        <begin position="14"/>
        <end position="19"/>
    </location>
    <ligand>
        <name>FAD</name>
        <dbReference type="ChEBI" id="CHEBI:57692"/>
    </ligand>
</feature>
<feature type="binding site" evidence="1">
    <location>
        <position position="126"/>
    </location>
    <ligand>
        <name>FAD</name>
        <dbReference type="ChEBI" id="CHEBI:57692"/>
    </ligand>
</feature>
<feature type="binding site" evidence="1">
    <location>
        <position position="181"/>
    </location>
    <ligand>
        <name>FAD</name>
        <dbReference type="ChEBI" id="CHEBI:57692"/>
    </ligand>
</feature>
<feature type="binding site" evidence="1">
    <location>
        <begin position="273"/>
        <end position="287"/>
    </location>
    <ligand>
        <name>NAD(+)</name>
        <dbReference type="ChEBI" id="CHEBI:57540"/>
    </ligand>
</feature>
<feature type="binding site" evidence="1">
    <location>
        <position position="370"/>
    </location>
    <ligand>
        <name>FAD</name>
        <dbReference type="ChEBI" id="CHEBI:57692"/>
    </ligand>
</feature>